<protein>
    <recommendedName>
        <fullName>Natterin-2</fullName>
        <ecNumber>3.4.-.-</ecNumber>
    </recommendedName>
</protein>
<comment type="function">
    <text evidence="2">Shows nociceptive, edema-inducing and kininogenase activity with release of kallidin from low molecular weight kininogen. The cleavage occurs at Met-Lys bonds.</text>
</comment>
<comment type="activity regulation">
    <text evidence="2">Inhibited by tissue-kallikrein inhibitor TKI and trasylol. Plasma kallikrein inhibitor PKSI527 and classical inhibitors of serine-, metallo-, thiol- or aspartate-peptidases evokes a minor inhibition of the peptide digestion.</text>
</comment>
<comment type="subcellular location">
    <subcellularLocation>
        <location evidence="2">Secreted</location>
    </subcellularLocation>
</comment>
<comment type="tissue specificity">
    <text evidence="2">Expressed by the venom gland.</text>
</comment>
<comment type="PTM">
    <text evidence="3">Contains 4 disulfide bonds.</text>
</comment>
<comment type="similarity">
    <text evidence="3">Belongs to the natterin family.</text>
</comment>
<name>NATT2_THANI</name>
<reference key="1">
    <citation type="journal article" date="2005" name="Biochimie">
        <title>Natterins, a new class of proteins with kininogenase activity characterized from Thalassophryne nattereri fish venom.</title>
        <authorList>
            <person name="Magalhaes G.S."/>
            <person name="Lopes-Ferreira M."/>
            <person name="Junqueira-de-Azevedo I.L.M."/>
            <person name="Spencer P.J."/>
            <person name="Araujo M.S."/>
            <person name="Portaro F.C.V."/>
            <person name="Ma L."/>
            <person name="Valente R.H."/>
            <person name="Juliano L."/>
            <person name="Fox J.W."/>
            <person name="Ho P.L."/>
            <person name="Moura-da-Silva A.M."/>
        </authorList>
    </citation>
    <scope>NUCLEOTIDE SEQUENCE [MRNA]</scope>
    <scope>PROTEIN SEQUENCE OF 29-40; 54-67; 104-111; 137-143; 164-180; 184-200; 215-220; 263-270 AND 288-300</scope>
    <scope>FUNCTION</scope>
    <scope>ACTIVITY REGULATION</scope>
    <scope>SUBCELLULAR LOCATION</scope>
    <scope>TISSUE SPECIFICITY</scope>
    <scope>IDENTIFICATION BY MASS SPECTROMETRY</scope>
    <source>
        <tissue>Venom</tissue>
        <tissue>Venom gland</tissue>
    </source>
</reference>
<evidence type="ECO:0000255" key="1"/>
<evidence type="ECO:0000269" key="2">
    <source>
    </source>
</evidence>
<evidence type="ECO:0000305" key="3"/>
<evidence type="ECO:0000305" key="4">
    <source>
    </source>
</evidence>
<proteinExistence type="evidence at protein level"/>
<keyword id="KW-0903">Direct protein sequencing</keyword>
<keyword id="KW-1015">Disulfide bond</keyword>
<keyword id="KW-0378">Hydrolase</keyword>
<keyword id="KW-0964">Secreted</keyword>
<keyword id="KW-0732">Signal</keyword>
<keyword id="KW-0800">Toxin</keyword>
<sequence length="376" mass="41327">MNLSVLLVTLLLLSWTSAEKDLKVRVARSTNDETNLHWVKCGGSVPDGAVSIRNTYVSPARTEYVCKCFCQAGYYSTKDSKCHYPYGTKEMATSTNCYILVNRDNFELLEWKDGYAGSVPDNAVSTCKTNKIYVGKGAYGLGKIEPANHCLYYVWDGAETWTKTYQALTMNKDVIEQAMKDVKYQTEGVTVIKGKPEVMRRSTVNNQHCKEVTKTVTLTKDISTDERWDVTNSVTFGVTTTVTAGIPDVSSASLEISMQATMDFAHGASKTETQSYMVTVSVPVPPKQSCTVSMVAQVNKADIPFTATLIRTYRGGKKTQTTTKGVYRTIQVAETHADVEQCTIIGDAKDCPNASSTITTLRPKLKSKKPAKPAGK</sequence>
<organism>
    <name type="scientific">Thalassophryne nattereri</name>
    <name type="common">Copper Joe toadfish</name>
    <dbReference type="NCBI Taxonomy" id="289382"/>
    <lineage>
        <taxon>Eukaryota</taxon>
        <taxon>Metazoa</taxon>
        <taxon>Chordata</taxon>
        <taxon>Craniata</taxon>
        <taxon>Vertebrata</taxon>
        <taxon>Euteleostomi</taxon>
        <taxon>Actinopterygii</taxon>
        <taxon>Neopterygii</taxon>
        <taxon>Teleostei</taxon>
        <taxon>Neoteleostei</taxon>
        <taxon>Acanthomorphata</taxon>
        <taxon>Batrachoidaria</taxon>
        <taxon>Batrachoididae</taxon>
        <taxon>Thalassophryne</taxon>
    </lineage>
</organism>
<feature type="signal peptide" evidence="1">
    <location>
        <begin position="1"/>
        <end position="18"/>
    </location>
</feature>
<feature type="propeptide" id="PRO_0000285218" evidence="4">
    <location>
        <begin position="19"/>
        <end position="27"/>
    </location>
</feature>
<feature type="chain" id="PRO_5000093996" description="Natterin-2" evidence="4">
    <location>
        <begin position="29"/>
        <end position="376"/>
    </location>
</feature>
<accession>Q66S21</accession>
<dbReference type="EC" id="3.4.-.-"/>
<dbReference type="EMBL" id="AY707909">
    <property type="protein sequence ID" value="AAU11823.1"/>
    <property type="molecule type" value="mRNA"/>
</dbReference>
<dbReference type="SMR" id="Q66S21"/>
<dbReference type="GO" id="GO:0005576">
    <property type="term" value="C:extracellular region"/>
    <property type="evidence" value="ECO:0007669"/>
    <property type="project" value="UniProtKB-SubCell"/>
</dbReference>
<dbReference type="GO" id="GO:0016787">
    <property type="term" value="F:hydrolase activity"/>
    <property type="evidence" value="ECO:0007669"/>
    <property type="project" value="UniProtKB-KW"/>
</dbReference>
<dbReference type="GO" id="GO:0090729">
    <property type="term" value="F:toxin activity"/>
    <property type="evidence" value="ECO:0007669"/>
    <property type="project" value="UniProtKB-KW"/>
</dbReference>
<dbReference type="CDD" id="cd20220">
    <property type="entry name" value="PFM_natterin-3-like"/>
    <property type="match status" value="1"/>
</dbReference>
<dbReference type="Gene3D" id="2.170.15.10">
    <property type="entry name" value="Proaerolysin, chain A, domain 3"/>
    <property type="match status" value="1"/>
</dbReference>
<dbReference type="InterPro" id="IPR006616">
    <property type="entry name" value="DM9_repeat"/>
</dbReference>
<dbReference type="InterPro" id="IPR053237">
    <property type="entry name" value="Natterin_C"/>
</dbReference>
<dbReference type="PANTHER" id="PTHR39244:SF5">
    <property type="entry name" value="NATTERIN-3-LIKE"/>
    <property type="match status" value="1"/>
</dbReference>
<dbReference type="PANTHER" id="PTHR39244">
    <property type="entry name" value="NATTERIN-4"/>
    <property type="match status" value="1"/>
</dbReference>
<dbReference type="Pfam" id="PF11901">
    <property type="entry name" value="DM9"/>
    <property type="match status" value="1"/>
</dbReference>
<dbReference type="SMART" id="SM00696">
    <property type="entry name" value="DM9"/>
    <property type="match status" value="1"/>
</dbReference>
<dbReference type="SUPFAM" id="SSF56973">
    <property type="entry name" value="Aerolisin/ETX pore-forming domain"/>
    <property type="match status" value="1"/>
</dbReference>